<name>SODE_SCHMA</name>
<keyword id="KW-0049">Antioxidant</keyword>
<keyword id="KW-0186">Copper</keyword>
<keyword id="KW-1015">Disulfide bond</keyword>
<keyword id="KW-0325">Glycoprotein</keyword>
<keyword id="KW-0479">Metal-binding</keyword>
<keyword id="KW-0560">Oxidoreductase</keyword>
<keyword id="KW-1185">Reference proteome</keyword>
<keyword id="KW-0964">Secreted</keyword>
<keyword id="KW-0732">Signal</keyword>
<keyword id="KW-0862">Zinc</keyword>
<comment type="function">
    <text>Destroys radicals which are normally produced within the cells and which are toxic to biological systems.</text>
</comment>
<comment type="catalytic activity">
    <reaction>
        <text>2 superoxide + 2 H(+) = H2O2 + O2</text>
        <dbReference type="Rhea" id="RHEA:20696"/>
        <dbReference type="ChEBI" id="CHEBI:15378"/>
        <dbReference type="ChEBI" id="CHEBI:15379"/>
        <dbReference type="ChEBI" id="CHEBI:16240"/>
        <dbReference type="ChEBI" id="CHEBI:18421"/>
        <dbReference type="EC" id="1.15.1.1"/>
    </reaction>
</comment>
<comment type="cofactor">
    <cofactor evidence="1">
        <name>Cu cation</name>
        <dbReference type="ChEBI" id="CHEBI:23378"/>
    </cofactor>
    <text evidence="1">Binds 1 copper ion per subunit.</text>
</comment>
<comment type="cofactor">
    <cofactor evidence="1">
        <name>Zn(2+)</name>
        <dbReference type="ChEBI" id="CHEBI:29105"/>
    </cofactor>
    <text evidence="1">Binds 1 zinc ion per subunit.</text>
</comment>
<comment type="subunit">
    <text>Homodimer.</text>
</comment>
<comment type="subcellular location">
    <subcellularLocation>
        <location>Secreted</location>
        <location>Extracellular space</location>
    </subcellularLocation>
</comment>
<comment type="similarity">
    <text evidence="3">Belongs to the Cu-Zn superoxide dismutase family.</text>
</comment>
<feature type="signal peptide">
    <location>
        <begin position="1"/>
        <end position="18"/>
    </location>
</feature>
<feature type="chain" id="PRO_0000032865" description="Extracellular superoxide dismutase [Cu-Zn]">
    <location>
        <begin position="19"/>
        <end position="184"/>
    </location>
</feature>
<feature type="binding site" evidence="1">
    <location>
        <position position="76"/>
    </location>
    <ligand>
        <name>Cu cation</name>
        <dbReference type="ChEBI" id="CHEBI:23378"/>
        <note>catalytic</note>
    </ligand>
</feature>
<feature type="binding site" evidence="1">
    <location>
        <position position="78"/>
    </location>
    <ligand>
        <name>Cu cation</name>
        <dbReference type="ChEBI" id="CHEBI:23378"/>
        <note>catalytic</note>
    </ligand>
</feature>
<feature type="binding site" evidence="1">
    <location>
        <position position="93"/>
    </location>
    <ligand>
        <name>Cu cation</name>
        <dbReference type="ChEBI" id="CHEBI:23378"/>
        <note>catalytic</note>
    </ligand>
</feature>
<feature type="binding site" evidence="1">
    <location>
        <position position="93"/>
    </location>
    <ligand>
        <name>Zn(2+)</name>
        <dbReference type="ChEBI" id="CHEBI:29105"/>
        <note>structural</note>
    </ligand>
</feature>
<feature type="binding site" evidence="1">
    <location>
        <position position="101"/>
    </location>
    <ligand>
        <name>Zn(2+)</name>
        <dbReference type="ChEBI" id="CHEBI:29105"/>
        <note>structural</note>
    </ligand>
</feature>
<feature type="binding site" evidence="1">
    <location>
        <position position="110"/>
    </location>
    <ligand>
        <name>Zn(2+)</name>
        <dbReference type="ChEBI" id="CHEBI:29105"/>
        <note>structural</note>
    </ligand>
</feature>
<feature type="binding site" evidence="1">
    <location>
        <position position="113"/>
    </location>
    <ligand>
        <name>Zn(2+)</name>
        <dbReference type="ChEBI" id="CHEBI:29105"/>
        <note>structural</note>
    </ligand>
</feature>
<feature type="binding site" evidence="1">
    <location>
        <position position="150"/>
    </location>
    <ligand>
        <name>Cu cation</name>
        <dbReference type="ChEBI" id="CHEBI:23378"/>
        <note>catalytic</note>
    </ligand>
</feature>
<feature type="glycosylation site" description="N-linked (GlcNAc...) asparagine" evidence="2">
    <location>
        <position position="61"/>
    </location>
</feature>
<feature type="disulfide bond" evidence="1">
    <location>
        <begin position="87"/>
        <end position="176"/>
    </location>
</feature>
<evidence type="ECO:0000250" key="1"/>
<evidence type="ECO:0000255" key="2"/>
<evidence type="ECO:0000305" key="3"/>
<proteinExistence type="evidence at transcript level"/>
<accession>P16026</accession>
<dbReference type="EC" id="1.15.1.1"/>
<dbReference type="EMBL" id="M27529">
    <property type="protein sequence ID" value="AAA29937.1"/>
    <property type="molecule type" value="mRNA"/>
</dbReference>
<dbReference type="EMBL" id="M28545">
    <property type="protein sequence ID" value="AAA29934.1"/>
    <property type="molecule type" value="Genomic_DNA"/>
</dbReference>
<dbReference type="EMBL" id="M28543">
    <property type="protein sequence ID" value="AAA29934.1"/>
    <property type="status" value="JOINED"/>
    <property type="molecule type" value="Genomic_DNA"/>
</dbReference>
<dbReference type="EMBL" id="M28544">
    <property type="protein sequence ID" value="AAA29934.1"/>
    <property type="status" value="JOINED"/>
    <property type="molecule type" value="Genomic_DNA"/>
</dbReference>
<dbReference type="PIR" id="A37019">
    <property type="entry name" value="A37019"/>
</dbReference>
<dbReference type="RefSeq" id="XP_018647047.1">
    <property type="nucleotide sequence ID" value="XM_018794575.1"/>
</dbReference>
<dbReference type="SMR" id="P16026"/>
<dbReference type="STRING" id="6183.P16026"/>
<dbReference type="EnsemblMetazoa" id="Smp_095980.1">
    <property type="protein sequence ID" value="Smp_095980.1"/>
    <property type="gene ID" value="Smp_095980"/>
</dbReference>
<dbReference type="GeneID" id="8341691"/>
<dbReference type="KEGG" id="smm:Smp_095980"/>
<dbReference type="WBParaSite" id="Smp_095980.1">
    <property type="protein sequence ID" value="Smp_095980.1"/>
    <property type="gene ID" value="Smp_095980"/>
</dbReference>
<dbReference type="CTD" id="8341691"/>
<dbReference type="eggNOG" id="KOG0441">
    <property type="taxonomic scope" value="Eukaryota"/>
</dbReference>
<dbReference type="HOGENOM" id="CLU_056632_4_2_1"/>
<dbReference type="InParanoid" id="P16026"/>
<dbReference type="OMA" id="LHERRDN"/>
<dbReference type="OrthoDB" id="2015551at2759"/>
<dbReference type="PhylomeDB" id="P16026"/>
<dbReference type="Proteomes" id="UP000008854">
    <property type="component" value="Unassembled WGS sequence"/>
</dbReference>
<dbReference type="GO" id="GO:0005576">
    <property type="term" value="C:extracellular region"/>
    <property type="evidence" value="ECO:0007669"/>
    <property type="project" value="UniProtKB-SubCell"/>
</dbReference>
<dbReference type="GO" id="GO:0005507">
    <property type="term" value="F:copper ion binding"/>
    <property type="evidence" value="ECO:0007669"/>
    <property type="project" value="InterPro"/>
</dbReference>
<dbReference type="GO" id="GO:0004784">
    <property type="term" value="F:superoxide dismutase activity"/>
    <property type="evidence" value="ECO:0007669"/>
    <property type="project" value="UniProtKB-EC"/>
</dbReference>
<dbReference type="GO" id="GO:0141082">
    <property type="term" value="P:symbiont-mediated detoxification of host-generated reactive oxygen species"/>
    <property type="evidence" value="ECO:0000269"/>
    <property type="project" value="SigSci"/>
</dbReference>
<dbReference type="CDD" id="cd00305">
    <property type="entry name" value="Cu-Zn_Superoxide_Dismutase"/>
    <property type="match status" value="1"/>
</dbReference>
<dbReference type="Gene3D" id="2.60.40.200">
    <property type="entry name" value="Superoxide dismutase, copper/zinc binding domain"/>
    <property type="match status" value="1"/>
</dbReference>
<dbReference type="InterPro" id="IPR036423">
    <property type="entry name" value="SOD-like_Cu/Zn_dom_sf"/>
</dbReference>
<dbReference type="InterPro" id="IPR024134">
    <property type="entry name" value="SOD_Cu/Zn_/chaperone"/>
</dbReference>
<dbReference type="InterPro" id="IPR018152">
    <property type="entry name" value="SOD_Cu/Zn_BS"/>
</dbReference>
<dbReference type="InterPro" id="IPR001424">
    <property type="entry name" value="SOD_Cu_Zn_dom"/>
</dbReference>
<dbReference type="PANTHER" id="PTHR10003">
    <property type="entry name" value="SUPEROXIDE DISMUTASE CU-ZN -RELATED"/>
    <property type="match status" value="1"/>
</dbReference>
<dbReference type="Pfam" id="PF00080">
    <property type="entry name" value="Sod_Cu"/>
    <property type="match status" value="1"/>
</dbReference>
<dbReference type="PRINTS" id="PR00068">
    <property type="entry name" value="CUZNDISMTASE"/>
</dbReference>
<dbReference type="SUPFAM" id="SSF49329">
    <property type="entry name" value="Cu,Zn superoxide dismutase-like"/>
    <property type="match status" value="1"/>
</dbReference>
<dbReference type="PROSITE" id="PS00087">
    <property type="entry name" value="SOD_CU_ZN_1"/>
    <property type="match status" value="1"/>
</dbReference>
<dbReference type="PROSITE" id="PS00332">
    <property type="entry name" value="SOD_CU_ZN_2"/>
    <property type="match status" value="1"/>
</dbReference>
<protein>
    <recommendedName>
        <fullName>Extracellular superoxide dismutase [Cu-Zn]</fullName>
        <shortName>EC-SOD</shortName>
        <ecNumber>1.15.1.1</ecNumber>
    </recommendedName>
</protein>
<reference key="1">
    <citation type="journal article" date="1988" name="Exp. Parasitol.">
        <title>Schistosoma mansoni: identification and analysis of an mRNA and a gene encoding superoxide dismutase (Cu/Zn).</title>
        <authorList>
            <person name="Simurda M.C."/>
            <person name="van Kuelen H."/>
            <person name="Rekosh D.M."/>
            <person name="Loverde P.T."/>
        </authorList>
    </citation>
    <scope>NUCLEOTIDE SEQUENCE [GENOMIC DNA / MRNA]</scope>
</reference>
<organism>
    <name type="scientific">Schistosoma mansoni</name>
    <name type="common">Blood fluke</name>
    <dbReference type="NCBI Taxonomy" id="6183"/>
    <lineage>
        <taxon>Eukaryota</taxon>
        <taxon>Metazoa</taxon>
        <taxon>Spiralia</taxon>
        <taxon>Lophotrochozoa</taxon>
        <taxon>Platyhelminthes</taxon>
        <taxon>Trematoda</taxon>
        <taxon>Digenea</taxon>
        <taxon>Strigeidida</taxon>
        <taxon>Schistosomatoidea</taxon>
        <taxon>Schistosomatidae</taxon>
        <taxon>Schistosoma</taxon>
    </lineage>
</organism>
<sequence>MTVYSYLVILFILLDNYCSAYGYGYSYYHRRHFDPAIASFTKEPYIGAVWFTQHGDYMYVNGSVAGLPPGKLLGTHVHRYGGLGNMCLEAGPHFNPFNQRHGPRHGYPRHAGDLGNIRVGRGGVAKFDFYVTIKGLGPFDGFIGRALVIHANRDDLGRNRDEGSRTTGNSGPRLACATIGFRAP</sequence>